<feature type="chain" id="PRO_1000049917" description="Large ribosomal subunit protein eL31">
    <location>
        <begin position="1"/>
        <end position="87"/>
    </location>
</feature>
<evidence type="ECO:0000255" key="1">
    <source>
        <dbReference type="HAMAP-Rule" id="MF_00410"/>
    </source>
</evidence>
<evidence type="ECO:0000305" key="2"/>
<accession>A3CWZ5</accession>
<reference key="1">
    <citation type="journal article" date="2009" name="Stand. Genomic Sci.">
        <title>Complete genome sequence of Methanoculleus marisnigri Romesser et al. 1981 type strain JR1.</title>
        <authorList>
            <person name="Anderson I.J."/>
            <person name="Sieprawska-Lupa M."/>
            <person name="Lapidus A."/>
            <person name="Nolan M."/>
            <person name="Copeland A."/>
            <person name="Glavina Del Rio T."/>
            <person name="Tice H."/>
            <person name="Dalin E."/>
            <person name="Barry K."/>
            <person name="Saunders E."/>
            <person name="Han C."/>
            <person name="Brettin T."/>
            <person name="Detter J.C."/>
            <person name="Bruce D."/>
            <person name="Mikhailova N."/>
            <person name="Pitluck S."/>
            <person name="Hauser L."/>
            <person name="Land M."/>
            <person name="Lucas S."/>
            <person name="Richardson P."/>
            <person name="Whitman W.B."/>
            <person name="Kyrpides N.C."/>
        </authorList>
    </citation>
    <scope>NUCLEOTIDE SEQUENCE [LARGE SCALE GENOMIC DNA]</scope>
    <source>
        <strain>ATCC 35101 / DSM 1498 / JR1</strain>
    </source>
</reference>
<gene>
    <name evidence="1" type="primary">rpl31e</name>
    <name type="ordered locus">Memar_1969</name>
</gene>
<protein>
    <recommendedName>
        <fullName evidence="1">Large ribosomal subunit protein eL31</fullName>
    </recommendedName>
    <alternativeName>
        <fullName evidence="2">50S ribosomal protein L31e</fullName>
    </alternativeName>
</protein>
<dbReference type="EMBL" id="CP000562">
    <property type="protein sequence ID" value="ABN57895.1"/>
    <property type="molecule type" value="Genomic_DNA"/>
</dbReference>
<dbReference type="RefSeq" id="WP_011844804.1">
    <property type="nucleotide sequence ID" value="NC_009051.1"/>
</dbReference>
<dbReference type="SMR" id="A3CWZ5"/>
<dbReference type="STRING" id="368407.Memar_1969"/>
<dbReference type="GeneID" id="4847857"/>
<dbReference type="KEGG" id="mem:Memar_1969"/>
<dbReference type="eggNOG" id="arCOG04473">
    <property type="taxonomic scope" value="Archaea"/>
</dbReference>
<dbReference type="HOGENOM" id="CLU_112570_3_2_2"/>
<dbReference type="OrthoDB" id="10127at2157"/>
<dbReference type="Proteomes" id="UP000002146">
    <property type="component" value="Chromosome"/>
</dbReference>
<dbReference type="GO" id="GO:0022625">
    <property type="term" value="C:cytosolic large ribosomal subunit"/>
    <property type="evidence" value="ECO:0007669"/>
    <property type="project" value="TreeGrafter"/>
</dbReference>
<dbReference type="GO" id="GO:0003735">
    <property type="term" value="F:structural constituent of ribosome"/>
    <property type="evidence" value="ECO:0007669"/>
    <property type="project" value="InterPro"/>
</dbReference>
<dbReference type="GO" id="GO:0002181">
    <property type="term" value="P:cytoplasmic translation"/>
    <property type="evidence" value="ECO:0007669"/>
    <property type="project" value="TreeGrafter"/>
</dbReference>
<dbReference type="CDD" id="cd00463">
    <property type="entry name" value="Ribosomal_L31e"/>
    <property type="match status" value="1"/>
</dbReference>
<dbReference type="Gene3D" id="3.10.440.10">
    <property type="match status" value="1"/>
</dbReference>
<dbReference type="HAMAP" id="MF_00410">
    <property type="entry name" value="Ribosomal_eL31"/>
    <property type="match status" value="1"/>
</dbReference>
<dbReference type="InterPro" id="IPR000054">
    <property type="entry name" value="Ribosomal_eL31"/>
</dbReference>
<dbReference type="InterPro" id="IPR023621">
    <property type="entry name" value="Ribosomal_eL31_dom_sf"/>
</dbReference>
<dbReference type="NCBIfam" id="NF002258">
    <property type="entry name" value="PRK01192.1-1"/>
    <property type="match status" value="1"/>
</dbReference>
<dbReference type="PANTHER" id="PTHR10956">
    <property type="entry name" value="60S RIBOSOMAL PROTEIN L31"/>
    <property type="match status" value="1"/>
</dbReference>
<dbReference type="PANTHER" id="PTHR10956:SF0">
    <property type="entry name" value="60S RIBOSOMAL PROTEIN L31"/>
    <property type="match status" value="1"/>
</dbReference>
<dbReference type="Pfam" id="PF01198">
    <property type="entry name" value="Ribosomal_L31e"/>
    <property type="match status" value="1"/>
</dbReference>
<dbReference type="SMART" id="SM01380">
    <property type="entry name" value="Ribosomal_L31e"/>
    <property type="match status" value="1"/>
</dbReference>
<dbReference type="SUPFAM" id="SSF54575">
    <property type="entry name" value="Ribosomal protein L31e"/>
    <property type="match status" value="1"/>
</dbReference>
<comment type="similarity">
    <text evidence="1">Belongs to the eukaryotic ribosomal protein eL31 family.</text>
</comment>
<sequence length="87" mass="10212">MAEALKEHIYIIPLREVKRAPRWKRGNTAIKDIRAFLVRHMKSEDVKLDKSINEKVWENGSSKPPRKIRVRAMKFEDGQVQAELAEE</sequence>
<organism>
    <name type="scientific">Methanoculleus marisnigri (strain ATCC 35101 / DSM 1498 / JR1)</name>
    <dbReference type="NCBI Taxonomy" id="368407"/>
    <lineage>
        <taxon>Archaea</taxon>
        <taxon>Methanobacteriati</taxon>
        <taxon>Methanobacteriota</taxon>
        <taxon>Stenosarchaea group</taxon>
        <taxon>Methanomicrobia</taxon>
        <taxon>Methanomicrobiales</taxon>
        <taxon>Methanomicrobiaceae</taxon>
        <taxon>Methanoculleus</taxon>
    </lineage>
</organism>
<keyword id="KW-0687">Ribonucleoprotein</keyword>
<keyword id="KW-0689">Ribosomal protein</keyword>
<proteinExistence type="inferred from homology"/>
<name>RL31_METMJ</name>